<sequence length="352" mass="39834">MAIISSNIGDNDFSFRKKELRLVDSKNIPEEKRNNNLNLARPLNLKEFIGQEQLKSSLRVAIDASIIRKEPLEHTLLYGQPGLGKTTLAFLIAHELNTKCRIATAPAIERPRDIVGLLLGLKEGEVLFIDEIHRLNRLTEELLYSAMEDFRLDLTMGANRGARCRTINLPRFTLIGATTKLASISAPLRDRFGISQKIEFYTCDELKQIIVNFSRLINLNLEDEASYDLAKISRGTPRIALRLLRRVRDYAQVVMKTNTISVNLIKKALNSYQIDEKGLDSLDRHYLSFLNQNNNIPIGLDSIASGLGDDSSMLEFVVEPYLIKIGFLTRTPRGRLLTALGKKYIDSKDDNF</sequence>
<organism>
    <name type="scientific">Prochlorococcus marinus (strain AS9601)</name>
    <dbReference type="NCBI Taxonomy" id="146891"/>
    <lineage>
        <taxon>Bacteria</taxon>
        <taxon>Bacillati</taxon>
        <taxon>Cyanobacteriota</taxon>
        <taxon>Cyanophyceae</taxon>
        <taxon>Synechococcales</taxon>
        <taxon>Prochlorococcaceae</taxon>
        <taxon>Prochlorococcus</taxon>
    </lineage>
</organism>
<dbReference type="EC" id="3.6.4.-" evidence="1"/>
<dbReference type="EMBL" id="CP000551">
    <property type="protein sequence ID" value="ABM71108.1"/>
    <property type="molecule type" value="Genomic_DNA"/>
</dbReference>
<dbReference type="RefSeq" id="WP_011819227.1">
    <property type="nucleotide sequence ID" value="NC_008816.1"/>
</dbReference>
<dbReference type="SMR" id="A2BTJ7"/>
<dbReference type="STRING" id="146891.A9601_18251"/>
<dbReference type="KEGG" id="pmb:A9601_18251"/>
<dbReference type="eggNOG" id="COG2255">
    <property type="taxonomic scope" value="Bacteria"/>
</dbReference>
<dbReference type="HOGENOM" id="CLU_055599_1_0_3"/>
<dbReference type="OrthoDB" id="9804478at2"/>
<dbReference type="Proteomes" id="UP000002590">
    <property type="component" value="Chromosome"/>
</dbReference>
<dbReference type="GO" id="GO:0005737">
    <property type="term" value="C:cytoplasm"/>
    <property type="evidence" value="ECO:0007669"/>
    <property type="project" value="UniProtKB-SubCell"/>
</dbReference>
<dbReference type="GO" id="GO:0048476">
    <property type="term" value="C:Holliday junction resolvase complex"/>
    <property type="evidence" value="ECO:0007669"/>
    <property type="project" value="UniProtKB-UniRule"/>
</dbReference>
<dbReference type="GO" id="GO:0005524">
    <property type="term" value="F:ATP binding"/>
    <property type="evidence" value="ECO:0007669"/>
    <property type="project" value="UniProtKB-UniRule"/>
</dbReference>
<dbReference type="GO" id="GO:0016887">
    <property type="term" value="F:ATP hydrolysis activity"/>
    <property type="evidence" value="ECO:0007669"/>
    <property type="project" value="InterPro"/>
</dbReference>
<dbReference type="GO" id="GO:0000400">
    <property type="term" value="F:four-way junction DNA binding"/>
    <property type="evidence" value="ECO:0007669"/>
    <property type="project" value="UniProtKB-UniRule"/>
</dbReference>
<dbReference type="GO" id="GO:0009378">
    <property type="term" value="F:four-way junction helicase activity"/>
    <property type="evidence" value="ECO:0007669"/>
    <property type="project" value="InterPro"/>
</dbReference>
<dbReference type="GO" id="GO:0006310">
    <property type="term" value="P:DNA recombination"/>
    <property type="evidence" value="ECO:0007669"/>
    <property type="project" value="UniProtKB-UniRule"/>
</dbReference>
<dbReference type="GO" id="GO:0006281">
    <property type="term" value="P:DNA repair"/>
    <property type="evidence" value="ECO:0007669"/>
    <property type="project" value="UniProtKB-UniRule"/>
</dbReference>
<dbReference type="CDD" id="cd00009">
    <property type="entry name" value="AAA"/>
    <property type="match status" value="1"/>
</dbReference>
<dbReference type="Gene3D" id="1.10.8.60">
    <property type="match status" value="1"/>
</dbReference>
<dbReference type="Gene3D" id="3.40.50.300">
    <property type="entry name" value="P-loop containing nucleotide triphosphate hydrolases"/>
    <property type="match status" value="1"/>
</dbReference>
<dbReference type="Gene3D" id="1.10.10.10">
    <property type="entry name" value="Winged helix-like DNA-binding domain superfamily/Winged helix DNA-binding domain"/>
    <property type="match status" value="1"/>
</dbReference>
<dbReference type="HAMAP" id="MF_00016">
    <property type="entry name" value="DNA_HJ_migration_RuvB"/>
    <property type="match status" value="1"/>
</dbReference>
<dbReference type="InterPro" id="IPR003593">
    <property type="entry name" value="AAA+_ATPase"/>
</dbReference>
<dbReference type="InterPro" id="IPR041445">
    <property type="entry name" value="AAA_lid_4"/>
</dbReference>
<dbReference type="InterPro" id="IPR004605">
    <property type="entry name" value="DNA_helicase_Holl-junc_RuvB"/>
</dbReference>
<dbReference type="InterPro" id="IPR027417">
    <property type="entry name" value="P-loop_NTPase"/>
</dbReference>
<dbReference type="InterPro" id="IPR008824">
    <property type="entry name" value="RuvB-like_N"/>
</dbReference>
<dbReference type="InterPro" id="IPR008823">
    <property type="entry name" value="RuvB_C"/>
</dbReference>
<dbReference type="InterPro" id="IPR036388">
    <property type="entry name" value="WH-like_DNA-bd_sf"/>
</dbReference>
<dbReference type="InterPro" id="IPR036390">
    <property type="entry name" value="WH_DNA-bd_sf"/>
</dbReference>
<dbReference type="NCBIfam" id="NF000868">
    <property type="entry name" value="PRK00080.1"/>
    <property type="match status" value="1"/>
</dbReference>
<dbReference type="NCBIfam" id="TIGR00635">
    <property type="entry name" value="ruvB"/>
    <property type="match status" value="1"/>
</dbReference>
<dbReference type="PANTHER" id="PTHR42848">
    <property type="match status" value="1"/>
</dbReference>
<dbReference type="PANTHER" id="PTHR42848:SF1">
    <property type="entry name" value="HOLLIDAY JUNCTION BRANCH MIGRATION COMPLEX SUBUNIT RUVB"/>
    <property type="match status" value="1"/>
</dbReference>
<dbReference type="Pfam" id="PF17864">
    <property type="entry name" value="AAA_lid_4"/>
    <property type="match status" value="1"/>
</dbReference>
<dbReference type="Pfam" id="PF05491">
    <property type="entry name" value="RuvB_C"/>
    <property type="match status" value="1"/>
</dbReference>
<dbReference type="Pfam" id="PF05496">
    <property type="entry name" value="RuvB_N"/>
    <property type="match status" value="1"/>
</dbReference>
<dbReference type="SMART" id="SM00382">
    <property type="entry name" value="AAA"/>
    <property type="match status" value="1"/>
</dbReference>
<dbReference type="SUPFAM" id="SSF52540">
    <property type="entry name" value="P-loop containing nucleoside triphosphate hydrolases"/>
    <property type="match status" value="1"/>
</dbReference>
<dbReference type="SUPFAM" id="SSF46785">
    <property type="entry name" value="Winged helix' DNA-binding domain"/>
    <property type="match status" value="1"/>
</dbReference>
<proteinExistence type="inferred from homology"/>
<accession>A2BTJ7</accession>
<feature type="chain" id="PRO_1000001444" description="Holliday junction branch migration complex subunit RuvB">
    <location>
        <begin position="1"/>
        <end position="352"/>
    </location>
</feature>
<feature type="region of interest" description="Large ATPase domain (RuvB-L)" evidence="1">
    <location>
        <begin position="13"/>
        <end position="201"/>
    </location>
</feature>
<feature type="region of interest" description="Small ATPAse domain (RuvB-S)" evidence="1">
    <location>
        <begin position="202"/>
        <end position="273"/>
    </location>
</feature>
<feature type="region of interest" description="Head domain (RuvB-H)" evidence="1">
    <location>
        <begin position="276"/>
        <end position="352"/>
    </location>
</feature>
<feature type="binding site" evidence="1">
    <location>
        <position position="41"/>
    </location>
    <ligand>
        <name>ATP</name>
        <dbReference type="ChEBI" id="CHEBI:30616"/>
    </ligand>
</feature>
<feature type="binding site" evidence="1">
    <location>
        <position position="82"/>
    </location>
    <ligand>
        <name>ATP</name>
        <dbReference type="ChEBI" id="CHEBI:30616"/>
    </ligand>
</feature>
<feature type="binding site" evidence="1">
    <location>
        <position position="85"/>
    </location>
    <ligand>
        <name>ATP</name>
        <dbReference type="ChEBI" id="CHEBI:30616"/>
    </ligand>
</feature>
<feature type="binding site" evidence="1">
    <location>
        <position position="86"/>
    </location>
    <ligand>
        <name>ATP</name>
        <dbReference type="ChEBI" id="CHEBI:30616"/>
    </ligand>
</feature>
<feature type="binding site" evidence="1">
    <location>
        <position position="86"/>
    </location>
    <ligand>
        <name>Mg(2+)</name>
        <dbReference type="ChEBI" id="CHEBI:18420"/>
    </ligand>
</feature>
<feature type="binding site" evidence="1">
    <location>
        <position position="87"/>
    </location>
    <ligand>
        <name>ATP</name>
        <dbReference type="ChEBI" id="CHEBI:30616"/>
    </ligand>
</feature>
<feature type="binding site" evidence="1">
    <location>
        <begin position="148"/>
        <end position="150"/>
    </location>
    <ligand>
        <name>ATP</name>
        <dbReference type="ChEBI" id="CHEBI:30616"/>
    </ligand>
</feature>
<feature type="binding site" evidence="1">
    <location>
        <position position="191"/>
    </location>
    <ligand>
        <name>ATP</name>
        <dbReference type="ChEBI" id="CHEBI:30616"/>
    </ligand>
</feature>
<feature type="binding site" evidence="1">
    <location>
        <position position="201"/>
    </location>
    <ligand>
        <name>ATP</name>
        <dbReference type="ChEBI" id="CHEBI:30616"/>
    </ligand>
</feature>
<feature type="binding site" evidence="1">
    <location>
        <position position="238"/>
    </location>
    <ligand>
        <name>ATP</name>
        <dbReference type="ChEBI" id="CHEBI:30616"/>
    </ligand>
</feature>
<feature type="binding site" evidence="1">
    <location>
        <position position="330"/>
    </location>
    <ligand>
        <name>DNA</name>
        <dbReference type="ChEBI" id="CHEBI:16991"/>
    </ligand>
</feature>
<feature type="binding site" evidence="1">
    <location>
        <position position="335"/>
    </location>
    <ligand>
        <name>DNA</name>
        <dbReference type="ChEBI" id="CHEBI:16991"/>
    </ligand>
</feature>
<comment type="function">
    <text evidence="1">The RuvA-RuvB-RuvC complex processes Holliday junction (HJ) DNA during genetic recombination and DNA repair, while the RuvA-RuvB complex plays an important role in the rescue of blocked DNA replication forks via replication fork reversal (RFR). RuvA specifically binds to HJ cruciform DNA, conferring on it an open structure. The RuvB hexamer acts as an ATP-dependent pump, pulling dsDNA into and through the RuvAB complex. RuvB forms 2 homohexamers on either side of HJ DNA bound by 1 or 2 RuvA tetramers; 4 subunits per hexamer contact DNA at a time. Coordinated motions by a converter formed by DNA-disengaged RuvB subunits stimulates ATP hydrolysis and nucleotide exchange. Immobilization of the converter enables RuvB to convert the ATP-contained energy into a lever motion, pulling 2 nucleotides of DNA out of the RuvA tetramer per ATP hydrolyzed, thus driving DNA branch migration. The RuvB motors rotate together with the DNA substrate, which together with the progressing nucleotide cycle form the mechanistic basis for DNA recombination by continuous HJ branch migration. Branch migration allows RuvC to scan DNA until it finds its consensus sequence, where it cleaves and resolves cruciform DNA.</text>
</comment>
<comment type="catalytic activity">
    <reaction evidence="1">
        <text>ATP + H2O = ADP + phosphate + H(+)</text>
        <dbReference type="Rhea" id="RHEA:13065"/>
        <dbReference type="ChEBI" id="CHEBI:15377"/>
        <dbReference type="ChEBI" id="CHEBI:15378"/>
        <dbReference type="ChEBI" id="CHEBI:30616"/>
        <dbReference type="ChEBI" id="CHEBI:43474"/>
        <dbReference type="ChEBI" id="CHEBI:456216"/>
    </reaction>
</comment>
<comment type="subunit">
    <text evidence="1">Homohexamer. Forms an RuvA(8)-RuvB(12)-Holliday junction (HJ) complex. HJ DNA is sandwiched between 2 RuvA tetramers; dsDNA enters through RuvA and exits via RuvB. An RuvB hexamer assembles on each DNA strand where it exits the tetramer. Each RuvB hexamer is contacted by two RuvA subunits (via domain III) on 2 adjacent RuvB subunits; this complex drives branch migration. In the full resolvosome a probable DNA-RuvA(4)-RuvB(12)-RuvC(2) complex forms which resolves the HJ.</text>
</comment>
<comment type="subcellular location">
    <subcellularLocation>
        <location evidence="1">Cytoplasm</location>
    </subcellularLocation>
</comment>
<comment type="domain">
    <text evidence="1">Has 3 domains, the large (RuvB-L) and small ATPase (RuvB-S) domains and the C-terminal head (RuvB-H) domain. The head domain binds DNA, while the ATPase domains jointly bind ATP, ADP or are empty depending on the state of the subunit in the translocation cycle. During a single DNA translocation step the structure of each domain remains the same, but their relative positions change.</text>
</comment>
<comment type="similarity">
    <text evidence="1">Belongs to the RuvB family.</text>
</comment>
<evidence type="ECO:0000255" key="1">
    <source>
        <dbReference type="HAMAP-Rule" id="MF_00016"/>
    </source>
</evidence>
<reference key="1">
    <citation type="journal article" date="2007" name="PLoS Genet.">
        <title>Patterns and implications of gene gain and loss in the evolution of Prochlorococcus.</title>
        <authorList>
            <person name="Kettler G.C."/>
            <person name="Martiny A.C."/>
            <person name="Huang K."/>
            <person name="Zucker J."/>
            <person name="Coleman M.L."/>
            <person name="Rodrigue S."/>
            <person name="Chen F."/>
            <person name="Lapidus A."/>
            <person name="Ferriera S."/>
            <person name="Johnson J."/>
            <person name="Steglich C."/>
            <person name="Church G.M."/>
            <person name="Richardson P."/>
            <person name="Chisholm S.W."/>
        </authorList>
    </citation>
    <scope>NUCLEOTIDE SEQUENCE [LARGE SCALE GENOMIC DNA]</scope>
    <source>
        <strain>AS9601</strain>
    </source>
</reference>
<name>RUVB_PROMS</name>
<gene>
    <name evidence="1" type="primary">ruvB</name>
    <name type="ordered locus">A9601_18251</name>
</gene>
<protein>
    <recommendedName>
        <fullName evidence="1">Holliday junction branch migration complex subunit RuvB</fullName>
        <ecNumber evidence="1">3.6.4.-</ecNumber>
    </recommendedName>
</protein>
<keyword id="KW-0067">ATP-binding</keyword>
<keyword id="KW-0963">Cytoplasm</keyword>
<keyword id="KW-0227">DNA damage</keyword>
<keyword id="KW-0233">DNA recombination</keyword>
<keyword id="KW-0234">DNA repair</keyword>
<keyword id="KW-0238">DNA-binding</keyword>
<keyword id="KW-0378">Hydrolase</keyword>
<keyword id="KW-0547">Nucleotide-binding</keyword>